<proteinExistence type="inferred from homology"/>
<sequence length="190" mass="20579">MFLDVVRKHGNGRVAYCYARALLDIVVDSADSICEEIKLVRAALTADGEVRAFFANPVTPKENKIAVLQALGKSCKLSRTLVGFVCVVVKDGKFGLLSDMFEEFFVLLMHARGQFALEITTASPVSAAEEKRILSIVKSEYGEPATVTKRVDPAILGGFIAKADSLVIDASFAGHLRELERVSRSVVCGV</sequence>
<dbReference type="EMBL" id="CP001079">
    <property type="protein sequence ID" value="ACM49714.1"/>
    <property type="molecule type" value="Genomic_DNA"/>
</dbReference>
<dbReference type="RefSeq" id="WP_010266221.1">
    <property type="nucleotide sequence ID" value="NZ_AFMS01000080.1"/>
</dbReference>
<dbReference type="SMR" id="B9KH10"/>
<dbReference type="STRING" id="320483.AMF_888"/>
<dbReference type="GeneID" id="7398736"/>
<dbReference type="KEGG" id="amf:AMF_888"/>
<dbReference type="eggNOG" id="COG0712">
    <property type="taxonomic scope" value="Bacteria"/>
</dbReference>
<dbReference type="HOGENOM" id="CLU_085114_1_1_5"/>
<dbReference type="Proteomes" id="UP000007307">
    <property type="component" value="Chromosome"/>
</dbReference>
<dbReference type="GO" id="GO:0005886">
    <property type="term" value="C:plasma membrane"/>
    <property type="evidence" value="ECO:0007669"/>
    <property type="project" value="UniProtKB-SubCell"/>
</dbReference>
<dbReference type="GO" id="GO:0045259">
    <property type="term" value="C:proton-transporting ATP synthase complex"/>
    <property type="evidence" value="ECO:0007669"/>
    <property type="project" value="UniProtKB-KW"/>
</dbReference>
<dbReference type="GO" id="GO:0046933">
    <property type="term" value="F:proton-transporting ATP synthase activity, rotational mechanism"/>
    <property type="evidence" value="ECO:0007669"/>
    <property type="project" value="UniProtKB-UniRule"/>
</dbReference>
<dbReference type="Gene3D" id="1.10.520.20">
    <property type="entry name" value="N-terminal domain of the delta subunit of the F1F0-ATP synthase"/>
    <property type="match status" value="1"/>
</dbReference>
<dbReference type="HAMAP" id="MF_01416">
    <property type="entry name" value="ATP_synth_delta_bact"/>
    <property type="match status" value="1"/>
</dbReference>
<dbReference type="InterPro" id="IPR026015">
    <property type="entry name" value="ATP_synth_OSCP/delta_N_sf"/>
</dbReference>
<dbReference type="InterPro" id="IPR000711">
    <property type="entry name" value="ATPase_OSCP/dsu"/>
</dbReference>
<dbReference type="NCBIfam" id="TIGR01145">
    <property type="entry name" value="ATP_synt_delta"/>
    <property type="match status" value="1"/>
</dbReference>
<dbReference type="PANTHER" id="PTHR11910">
    <property type="entry name" value="ATP SYNTHASE DELTA CHAIN"/>
    <property type="match status" value="1"/>
</dbReference>
<dbReference type="Pfam" id="PF00213">
    <property type="entry name" value="OSCP"/>
    <property type="match status" value="1"/>
</dbReference>
<dbReference type="PRINTS" id="PR00125">
    <property type="entry name" value="ATPASEDELTA"/>
</dbReference>
<dbReference type="SUPFAM" id="SSF47928">
    <property type="entry name" value="N-terminal domain of the delta subunit of the F1F0-ATP synthase"/>
    <property type="match status" value="1"/>
</dbReference>
<reference key="1">
    <citation type="journal article" date="2009" name="BMC Genomics">
        <title>Conservation in the face of diversity: multistrain analysis of an intracellular bacterium.</title>
        <authorList>
            <person name="Dark M.J."/>
            <person name="Herndon D.R."/>
            <person name="Kappmeyer L.S."/>
            <person name="Gonzales M.P."/>
            <person name="Nordeen E."/>
            <person name="Palmer G.H."/>
            <person name="Knowles D.P. Jr."/>
            <person name="Brayton K.A."/>
        </authorList>
    </citation>
    <scope>NUCLEOTIDE SEQUENCE [LARGE SCALE GENOMIC DNA]</scope>
    <source>
        <strain>Florida</strain>
    </source>
</reference>
<comment type="function">
    <text evidence="1">F(1)F(0) ATP synthase produces ATP from ADP in the presence of a proton or sodium gradient. F-type ATPases consist of two structural domains, F(1) containing the extramembraneous catalytic core and F(0) containing the membrane proton channel, linked together by a central stalk and a peripheral stalk. During catalysis, ATP synthesis in the catalytic domain of F(1) is coupled via a rotary mechanism of the central stalk subunits to proton translocation.</text>
</comment>
<comment type="function">
    <text evidence="1">This protein is part of the stalk that links CF(0) to CF(1). It either transmits conformational changes from CF(0) to CF(1) or is implicated in proton conduction.</text>
</comment>
<comment type="subunit">
    <text evidence="1">F-type ATPases have 2 components, F(1) - the catalytic core - and F(0) - the membrane proton channel. F(1) has five subunits: alpha(3), beta(3), gamma(1), delta(1), epsilon(1). F(0) has three main subunits: a(1), b(2) and c(10-14). The alpha and beta chains form an alternating ring which encloses part of the gamma chain. F(1) is attached to F(0) by a central stalk formed by the gamma and epsilon chains, while a peripheral stalk is formed by the delta and b chains.</text>
</comment>
<comment type="subcellular location">
    <subcellularLocation>
        <location evidence="1">Cell inner membrane</location>
        <topology evidence="1">Peripheral membrane protein</topology>
    </subcellularLocation>
</comment>
<comment type="similarity">
    <text evidence="1">Belongs to the ATPase delta chain family.</text>
</comment>
<accession>B9KH10</accession>
<feature type="chain" id="PRO_0000382052" description="ATP synthase subunit delta">
    <location>
        <begin position="1"/>
        <end position="190"/>
    </location>
</feature>
<evidence type="ECO:0000255" key="1">
    <source>
        <dbReference type="HAMAP-Rule" id="MF_01416"/>
    </source>
</evidence>
<gene>
    <name evidence="1" type="primary">atpH</name>
    <name type="ordered locus">AMF_888</name>
</gene>
<protein>
    <recommendedName>
        <fullName evidence="1">ATP synthase subunit delta</fullName>
    </recommendedName>
    <alternativeName>
        <fullName evidence="1">ATP synthase F(1) sector subunit delta</fullName>
    </alternativeName>
    <alternativeName>
        <fullName evidence="1">F-type ATPase subunit delta</fullName>
        <shortName evidence="1">F-ATPase subunit delta</shortName>
    </alternativeName>
</protein>
<name>ATPD_ANAMF</name>
<keyword id="KW-0066">ATP synthesis</keyword>
<keyword id="KW-0997">Cell inner membrane</keyword>
<keyword id="KW-1003">Cell membrane</keyword>
<keyword id="KW-0139">CF(1)</keyword>
<keyword id="KW-0375">Hydrogen ion transport</keyword>
<keyword id="KW-0406">Ion transport</keyword>
<keyword id="KW-0472">Membrane</keyword>
<keyword id="KW-1185">Reference proteome</keyword>
<keyword id="KW-0813">Transport</keyword>
<organism>
    <name type="scientific">Anaplasma marginale (strain Florida)</name>
    <dbReference type="NCBI Taxonomy" id="320483"/>
    <lineage>
        <taxon>Bacteria</taxon>
        <taxon>Pseudomonadati</taxon>
        <taxon>Pseudomonadota</taxon>
        <taxon>Alphaproteobacteria</taxon>
        <taxon>Rickettsiales</taxon>
        <taxon>Anaplasmataceae</taxon>
        <taxon>Anaplasma</taxon>
    </lineage>
</organism>